<keyword id="KW-0227">DNA damage</keyword>
<keyword id="KW-0234">DNA repair</keyword>
<keyword id="KW-0235">DNA replication</keyword>
<keyword id="KW-0436">Ligase</keyword>
<keyword id="KW-0460">Magnesium</keyword>
<keyword id="KW-0464">Manganese</keyword>
<keyword id="KW-0479">Metal-binding</keyword>
<keyword id="KW-0520">NAD</keyword>
<keyword id="KW-1185">Reference proteome</keyword>
<keyword id="KW-0862">Zinc</keyword>
<gene>
    <name evidence="1" type="primary">ligA</name>
    <name type="ordered locus">Gmet_2728</name>
</gene>
<feature type="chain" id="PRO_0000313249" description="DNA ligase">
    <location>
        <begin position="1"/>
        <end position="671"/>
    </location>
</feature>
<feature type="domain" description="BRCT" evidence="1">
    <location>
        <begin position="591"/>
        <end position="671"/>
    </location>
</feature>
<feature type="active site" description="N6-AMP-lysine intermediate" evidence="1">
    <location>
        <position position="119"/>
    </location>
</feature>
<feature type="binding site" evidence="1">
    <location>
        <begin position="34"/>
        <end position="38"/>
    </location>
    <ligand>
        <name>NAD(+)</name>
        <dbReference type="ChEBI" id="CHEBI:57540"/>
    </ligand>
</feature>
<feature type="binding site" evidence="1">
    <location>
        <begin position="83"/>
        <end position="84"/>
    </location>
    <ligand>
        <name>NAD(+)</name>
        <dbReference type="ChEBI" id="CHEBI:57540"/>
    </ligand>
</feature>
<feature type="binding site" evidence="1">
    <location>
        <position position="117"/>
    </location>
    <ligand>
        <name>NAD(+)</name>
        <dbReference type="ChEBI" id="CHEBI:57540"/>
    </ligand>
</feature>
<feature type="binding site" evidence="1">
    <location>
        <position position="140"/>
    </location>
    <ligand>
        <name>NAD(+)</name>
        <dbReference type="ChEBI" id="CHEBI:57540"/>
    </ligand>
</feature>
<feature type="binding site" evidence="1">
    <location>
        <position position="177"/>
    </location>
    <ligand>
        <name>NAD(+)</name>
        <dbReference type="ChEBI" id="CHEBI:57540"/>
    </ligand>
</feature>
<feature type="binding site" evidence="1">
    <location>
        <position position="293"/>
    </location>
    <ligand>
        <name>NAD(+)</name>
        <dbReference type="ChEBI" id="CHEBI:57540"/>
    </ligand>
</feature>
<feature type="binding site" evidence="1">
    <location>
        <position position="317"/>
    </location>
    <ligand>
        <name>NAD(+)</name>
        <dbReference type="ChEBI" id="CHEBI:57540"/>
    </ligand>
</feature>
<feature type="binding site" evidence="1">
    <location>
        <position position="411"/>
    </location>
    <ligand>
        <name>Zn(2+)</name>
        <dbReference type="ChEBI" id="CHEBI:29105"/>
    </ligand>
</feature>
<feature type="binding site" evidence="1">
    <location>
        <position position="414"/>
    </location>
    <ligand>
        <name>Zn(2+)</name>
        <dbReference type="ChEBI" id="CHEBI:29105"/>
    </ligand>
</feature>
<feature type="binding site" evidence="1">
    <location>
        <position position="429"/>
    </location>
    <ligand>
        <name>Zn(2+)</name>
        <dbReference type="ChEBI" id="CHEBI:29105"/>
    </ligand>
</feature>
<feature type="binding site" evidence="1">
    <location>
        <position position="434"/>
    </location>
    <ligand>
        <name>Zn(2+)</name>
        <dbReference type="ChEBI" id="CHEBI:29105"/>
    </ligand>
</feature>
<protein>
    <recommendedName>
        <fullName evidence="1">DNA ligase</fullName>
        <ecNumber evidence="1">6.5.1.2</ecNumber>
    </recommendedName>
    <alternativeName>
        <fullName evidence="1">Polydeoxyribonucleotide synthase [NAD(+)]</fullName>
    </alternativeName>
</protein>
<name>DNLJ_GEOMG</name>
<organism>
    <name type="scientific">Geobacter metallireducens (strain ATCC 53774 / DSM 7210 / GS-15)</name>
    <dbReference type="NCBI Taxonomy" id="269799"/>
    <lineage>
        <taxon>Bacteria</taxon>
        <taxon>Pseudomonadati</taxon>
        <taxon>Thermodesulfobacteriota</taxon>
        <taxon>Desulfuromonadia</taxon>
        <taxon>Geobacterales</taxon>
        <taxon>Geobacteraceae</taxon>
        <taxon>Geobacter</taxon>
    </lineage>
</organism>
<evidence type="ECO:0000255" key="1">
    <source>
        <dbReference type="HAMAP-Rule" id="MF_01588"/>
    </source>
</evidence>
<dbReference type="EC" id="6.5.1.2" evidence="1"/>
<dbReference type="EMBL" id="CP000148">
    <property type="protein sequence ID" value="ABB32946.1"/>
    <property type="molecule type" value="Genomic_DNA"/>
</dbReference>
<dbReference type="RefSeq" id="WP_004511732.1">
    <property type="nucleotide sequence ID" value="NC_007517.1"/>
</dbReference>
<dbReference type="SMR" id="Q39S28"/>
<dbReference type="STRING" id="269799.Gmet_2728"/>
<dbReference type="KEGG" id="gme:Gmet_2728"/>
<dbReference type="eggNOG" id="COG0272">
    <property type="taxonomic scope" value="Bacteria"/>
</dbReference>
<dbReference type="HOGENOM" id="CLU_007764_2_1_7"/>
<dbReference type="Proteomes" id="UP000007073">
    <property type="component" value="Chromosome"/>
</dbReference>
<dbReference type="GO" id="GO:0005829">
    <property type="term" value="C:cytosol"/>
    <property type="evidence" value="ECO:0007669"/>
    <property type="project" value="TreeGrafter"/>
</dbReference>
<dbReference type="GO" id="GO:0003677">
    <property type="term" value="F:DNA binding"/>
    <property type="evidence" value="ECO:0007669"/>
    <property type="project" value="InterPro"/>
</dbReference>
<dbReference type="GO" id="GO:0003911">
    <property type="term" value="F:DNA ligase (NAD+) activity"/>
    <property type="evidence" value="ECO:0007669"/>
    <property type="project" value="UniProtKB-UniRule"/>
</dbReference>
<dbReference type="GO" id="GO:0046872">
    <property type="term" value="F:metal ion binding"/>
    <property type="evidence" value="ECO:0007669"/>
    <property type="project" value="UniProtKB-KW"/>
</dbReference>
<dbReference type="GO" id="GO:0006281">
    <property type="term" value="P:DNA repair"/>
    <property type="evidence" value="ECO:0007669"/>
    <property type="project" value="UniProtKB-KW"/>
</dbReference>
<dbReference type="GO" id="GO:0006260">
    <property type="term" value="P:DNA replication"/>
    <property type="evidence" value="ECO:0007669"/>
    <property type="project" value="UniProtKB-KW"/>
</dbReference>
<dbReference type="CDD" id="cd17748">
    <property type="entry name" value="BRCT_DNA_ligase_like"/>
    <property type="match status" value="1"/>
</dbReference>
<dbReference type="CDD" id="cd00114">
    <property type="entry name" value="LIGANc"/>
    <property type="match status" value="1"/>
</dbReference>
<dbReference type="FunFam" id="1.10.150.20:FF:000006">
    <property type="entry name" value="DNA ligase"/>
    <property type="match status" value="1"/>
</dbReference>
<dbReference type="FunFam" id="1.10.150.20:FF:000007">
    <property type="entry name" value="DNA ligase"/>
    <property type="match status" value="1"/>
</dbReference>
<dbReference type="FunFam" id="1.10.287.610:FF:000002">
    <property type="entry name" value="DNA ligase"/>
    <property type="match status" value="1"/>
</dbReference>
<dbReference type="FunFam" id="2.40.50.140:FF:000012">
    <property type="entry name" value="DNA ligase"/>
    <property type="match status" value="1"/>
</dbReference>
<dbReference type="FunFam" id="3.30.470.30:FF:000001">
    <property type="entry name" value="DNA ligase"/>
    <property type="match status" value="1"/>
</dbReference>
<dbReference type="Gene3D" id="6.20.10.30">
    <property type="match status" value="1"/>
</dbReference>
<dbReference type="Gene3D" id="1.10.150.20">
    <property type="entry name" value="5' to 3' exonuclease, C-terminal subdomain"/>
    <property type="match status" value="2"/>
</dbReference>
<dbReference type="Gene3D" id="3.40.50.10190">
    <property type="entry name" value="BRCT domain"/>
    <property type="match status" value="1"/>
</dbReference>
<dbReference type="Gene3D" id="3.30.470.30">
    <property type="entry name" value="DNA ligase/mRNA capping enzyme"/>
    <property type="match status" value="1"/>
</dbReference>
<dbReference type="Gene3D" id="1.10.287.610">
    <property type="entry name" value="Helix hairpin bin"/>
    <property type="match status" value="1"/>
</dbReference>
<dbReference type="Gene3D" id="2.40.50.140">
    <property type="entry name" value="Nucleic acid-binding proteins"/>
    <property type="match status" value="1"/>
</dbReference>
<dbReference type="HAMAP" id="MF_01588">
    <property type="entry name" value="DNA_ligase_A"/>
    <property type="match status" value="1"/>
</dbReference>
<dbReference type="InterPro" id="IPR001357">
    <property type="entry name" value="BRCT_dom"/>
</dbReference>
<dbReference type="InterPro" id="IPR036420">
    <property type="entry name" value="BRCT_dom_sf"/>
</dbReference>
<dbReference type="InterPro" id="IPR041663">
    <property type="entry name" value="DisA/LigA_HHH"/>
</dbReference>
<dbReference type="InterPro" id="IPR001679">
    <property type="entry name" value="DNA_ligase"/>
</dbReference>
<dbReference type="InterPro" id="IPR018239">
    <property type="entry name" value="DNA_ligase_AS"/>
</dbReference>
<dbReference type="InterPro" id="IPR033136">
    <property type="entry name" value="DNA_ligase_CS"/>
</dbReference>
<dbReference type="InterPro" id="IPR013839">
    <property type="entry name" value="DNAligase_adenylation"/>
</dbReference>
<dbReference type="InterPro" id="IPR013840">
    <property type="entry name" value="DNAligase_N"/>
</dbReference>
<dbReference type="InterPro" id="IPR003583">
    <property type="entry name" value="Hlx-hairpin-Hlx_DNA-bd_motif"/>
</dbReference>
<dbReference type="InterPro" id="IPR012340">
    <property type="entry name" value="NA-bd_OB-fold"/>
</dbReference>
<dbReference type="InterPro" id="IPR004150">
    <property type="entry name" value="NAD_DNA_ligase_OB"/>
</dbReference>
<dbReference type="InterPro" id="IPR010994">
    <property type="entry name" value="RuvA_2-like"/>
</dbReference>
<dbReference type="InterPro" id="IPR004149">
    <property type="entry name" value="Znf_DNAligase_C4"/>
</dbReference>
<dbReference type="NCBIfam" id="TIGR00575">
    <property type="entry name" value="dnlj"/>
    <property type="match status" value="1"/>
</dbReference>
<dbReference type="NCBIfam" id="NF005932">
    <property type="entry name" value="PRK07956.1"/>
    <property type="match status" value="1"/>
</dbReference>
<dbReference type="PANTHER" id="PTHR23389">
    <property type="entry name" value="CHROMOSOME TRANSMISSION FIDELITY FACTOR 18"/>
    <property type="match status" value="1"/>
</dbReference>
<dbReference type="PANTHER" id="PTHR23389:SF9">
    <property type="entry name" value="DNA LIGASE"/>
    <property type="match status" value="1"/>
</dbReference>
<dbReference type="Pfam" id="PF00533">
    <property type="entry name" value="BRCT"/>
    <property type="match status" value="1"/>
</dbReference>
<dbReference type="Pfam" id="PF01653">
    <property type="entry name" value="DNA_ligase_aden"/>
    <property type="match status" value="1"/>
</dbReference>
<dbReference type="Pfam" id="PF03120">
    <property type="entry name" value="DNA_ligase_OB"/>
    <property type="match status" value="1"/>
</dbReference>
<dbReference type="Pfam" id="PF03119">
    <property type="entry name" value="DNA_ligase_ZBD"/>
    <property type="match status" value="1"/>
</dbReference>
<dbReference type="Pfam" id="PF12826">
    <property type="entry name" value="HHH_2"/>
    <property type="match status" value="1"/>
</dbReference>
<dbReference type="Pfam" id="PF14520">
    <property type="entry name" value="HHH_5"/>
    <property type="match status" value="1"/>
</dbReference>
<dbReference type="Pfam" id="PF22745">
    <property type="entry name" value="Nlig-Ia"/>
    <property type="match status" value="1"/>
</dbReference>
<dbReference type="PIRSF" id="PIRSF001604">
    <property type="entry name" value="LigA"/>
    <property type="match status" value="1"/>
</dbReference>
<dbReference type="SMART" id="SM00292">
    <property type="entry name" value="BRCT"/>
    <property type="match status" value="1"/>
</dbReference>
<dbReference type="SMART" id="SM00278">
    <property type="entry name" value="HhH1"/>
    <property type="match status" value="4"/>
</dbReference>
<dbReference type="SMART" id="SM00532">
    <property type="entry name" value="LIGANc"/>
    <property type="match status" value="1"/>
</dbReference>
<dbReference type="SUPFAM" id="SSF52113">
    <property type="entry name" value="BRCT domain"/>
    <property type="match status" value="1"/>
</dbReference>
<dbReference type="SUPFAM" id="SSF56091">
    <property type="entry name" value="DNA ligase/mRNA capping enzyme, catalytic domain"/>
    <property type="match status" value="1"/>
</dbReference>
<dbReference type="SUPFAM" id="SSF50249">
    <property type="entry name" value="Nucleic acid-binding proteins"/>
    <property type="match status" value="1"/>
</dbReference>
<dbReference type="SUPFAM" id="SSF47781">
    <property type="entry name" value="RuvA domain 2-like"/>
    <property type="match status" value="1"/>
</dbReference>
<dbReference type="PROSITE" id="PS50172">
    <property type="entry name" value="BRCT"/>
    <property type="match status" value="1"/>
</dbReference>
<dbReference type="PROSITE" id="PS01055">
    <property type="entry name" value="DNA_LIGASE_N1"/>
    <property type="match status" value="1"/>
</dbReference>
<dbReference type="PROSITE" id="PS01056">
    <property type="entry name" value="DNA_LIGASE_N2"/>
    <property type="match status" value="1"/>
</dbReference>
<proteinExistence type="inferred from homology"/>
<reference key="1">
    <citation type="journal article" date="2009" name="BMC Microbiol.">
        <title>The genome sequence of Geobacter metallireducens: features of metabolism, physiology and regulation common and dissimilar to Geobacter sulfurreducens.</title>
        <authorList>
            <person name="Aklujkar M."/>
            <person name="Krushkal J."/>
            <person name="DiBartolo G."/>
            <person name="Lapidus A."/>
            <person name="Land M.L."/>
            <person name="Lovley D.R."/>
        </authorList>
    </citation>
    <scope>NUCLEOTIDE SEQUENCE [LARGE SCALE GENOMIC DNA]</scope>
    <source>
        <strain>ATCC 53774 / DSM 7210 / GS-15</strain>
    </source>
</reference>
<accession>Q39S28</accession>
<comment type="function">
    <text evidence="1">DNA ligase that catalyzes the formation of phosphodiester linkages between 5'-phosphoryl and 3'-hydroxyl groups in double-stranded DNA using NAD as a coenzyme and as the energy source for the reaction. It is essential for DNA replication and repair of damaged DNA.</text>
</comment>
<comment type="catalytic activity">
    <reaction evidence="1">
        <text>NAD(+) + (deoxyribonucleotide)n-3'-hydroxyl + 5'-phospho-(deoxyribonucleotide)m = (deoxyribonucleotide)n+m + AMP + beta-nicotinamide D-nucleotide.</text>
        <dbReference type="EC" id="6.5.1.2"/>
    </reaction>
</comment>
<comment type="cofactor">
    <cofactor evidence="1">
        <name>Mg(2+)</name>
        <dbReference type="ChEBI" id="CHEBI:18420"/>
    </cofactor>
    <cofactor evidence="1">
        <name>Mn(2+)</name>
        <dbReference type="ChEBI" id="CHEBI:29035"/>
    </cofactor>
</comment>
<comment type="similarity">
    <text evidence="1">Belongs to the NAD-dependent DNA ligase family. LigA subfamily.</text>
</comment>
<sequence>MDRNAAERRIAELRAEIRRHDHLYYVLDRPELTDAEYDALYRELLKLEEEHPELVTPDSPSRRVGGAPLEKFKQVTHRIPMLSLENAFTDGDIAEFDARVKRALALPAGEEIAYVCEPKLDGLAVELVYEYGTLTVGSTRGDGVVGENVTQNLKTVKSIPLRLEGENPPELLEVRGEVFLPLAAFQRLNAQREEEGEPPFANPRNAAAGSLRQLDSRITARRPLTMFCYAPGEIRGADFGSQGEFLSALRQRGLPVTSLARQVTGVAGVLAYYREMTEKRDTLPYEIDGVVVKVDSFPLQRELGEKSRSPRWAVAVKFPPRQAVTVIEDIVPSVGRTGVITPTANLRPVEVSGVTVSRATLHNWEEMERKDIRIGDTVVIERAGDVIPAVVKVLTEKRSGSERFLPIPAACPECGSEVVKIPDEVAVRCMGLSCPAQIRESIIHFASRNAMDMEGLGEKYIEQLLRLGLVGNVADLYTLTRDDFMKFDRMGEKLAENLLNAIEASKKRELSRFIFALGIRHVGEHTAKLLATAFGSIDNLARATEAELLSIREIGPQVAQSITTFFHNEGNRETIRRMVEAGVEPTVEEKKVGGKFTGKTFVFTGTLIRFSRSEAQKMVESEGGHAAGSVSKKTDYVVAGDEAGSKLDKARQLGVTVLAEDEFLQMLEGEQ</sequence>